<gene>
    <name type="primary">Gk5</name>
</gene>
<evidence type="ECO:0000250" key="1">
    <source>
        <dbReference type="UniProtKB" id="P0A6F3"/>
    </source>
</evidence>
<evidence type="ECO:0000269" key="2">
    <source>
    </source>
</evidence>
<evidence type="ECO:0000303" key="3">
    <source>
    </source>
</evidence>
<evidence type="ECO:0000303" key="4">
    <source>
    </source>
</evidence>
<evidence type="ECO:0000303" key="5">
    <source>
    </source>
</evidence>
<evidence type="ECO:0000305" key="6"/>
<evidence type="ECO:0000305" key="7">
    <source>
    </source>
</evidence>
<sequence>MSGQQERAERQREELSASASPPSRFVLGLDVGSTVIRCHVYDQTARVRGSSAQKVENVYPQPGWVEIDPDSLWAQFVAVIKDAVKAAGVQMNQIVGLGISTQRATFITWNKKTGHHFHNFISWQDLRAAELVKSWNNSLIMKLLHGATRVLHFFSRSKVMLTVSRFNFSTQHATLRLTWILQNLSEVKRAVEEDNCCFGTIDTWLLYKLTKGSSYATDYSNASTTGFFDPYAMRWSRLITTMVSIPLSILPPVKDTSYNFGSVDEKIFGVPIPVVALVGDQQSAMFGECCFETGDVKLTMGTGTFLDINTGKNLQHVNGGFYPLIGWKIGQELVCLAEGNAGDTGTAIMWAQKLDLFTDAAETEKMALSLEDSEGVYFVPSFSGLQAPLNDPCACASFMGLKHSTNKYHLVRAILESIAFRNKQLYDMLQREIQIPVTNIRADGGVCNNAFVMQMTSDLINEKIDRPAHFDMSCLGAASLAGLAVGFWADKEELQKLRQSEMVFKPQKKWQEYEVNMENWVKAVKRSMNWYNKT</sequence>
<comment type="function">
    <text evidence="2">Skin-specific kinase that plays a key role in glycerol metabolism, catalyzing its phosphorylation to produce sn-glycerol 3-phosphate. Involved in skin-specific regulation of sterol regulatory element-binding protein (SREBP) processing and lipid biosynthesis.</text>
</comment>
<comment type="catalytic activity">
    <reaction evidence="2">
        <text>glycerol + ATP = sn-glycerol 3-phosphate + ADP + H(+)</text>
        <dbReference type="Rhea" id="RHEA:21644"/>
        <dbReference type="ChEBI" id="CHEBI:15378"/>
        <dbReference type="ChEBI" id="CHEBI:17754"/>
        <dbReference type="ChEBI" id="CHEBI:30616"/>
        <dbReference type="ChEBI" id="CHEBI:57597"/>
        <dbReference type="ChEBI" id="CHEBI:456216"/>
        <dbReference type="EC" id="2.7.1.30"/>
    </reaction>
    <physiologicalReaction direction="left-to-right" evidence="7">
        <dbReference type="Rhea" id="RHEA:21645"/>
    </physiologicalReaction>
</comment>
<comment type="pathway">
    <text evidence="2">Polyol metabolism; glycerol degradation via glycerol kinase pathway; sn-glycerol 3-phosphate from glycerol: step 1/1.</text>
</comment>
<comment type="subcellular location">
    <subcellularLocation>
        <location evidence="2">Cytoplasm</location>
    </subcellularLocation>
</comment>
<comment type="alternative products">
    <event type="alternative splicing"/>
    <isoform>
        <id>Q8BX05-1</id>
        <name>1</name>
        <name evidence="5">GK5-v2</name>
        <sequence type="displayed"/>
    </isoform>
    <isoform>
        <id>Q8BX05-2</id>
        <name>2</name>
        <name evidence="5">GK5-v1</name>
        <sequence type="described" ref="VSP_032125"/>
    </isoform>
    <isoform>
        <id>Q8BX05-3</id>
        <name>3</name>
        <sequence type="described" ref="VSP_032124 VSP_032125"/>
    </isoform>
</comment>
<comment type="tissue specificity">
    <text evidence="2">Expressed predominantly in sebaceous glands.</text>
</comment>
<comment type="similarity">
    <text evidence="6">Belongs to the FGGY kinase family.</text>
</comment>
<comment type="sequence caution" evidence="6">
    <conflict type="erroneous initiation">
        <sequence resource="EMBL-CDS" id="AAH50033"/>
    </conflict>
</comment>
<keyword id="KW-0025">Alternative splicing</keyword>
<keyword id="KW-0067">ATP-binding</keyword>
<keyword id="KW-0963">Cytoplasm</keyword>
<keyword id="KW-0319">Glycerol metabolism</keyword>
<keyword id="KW-0418">Kinase</keyword>
<keyword id="KW-0547">Nucleotide-binding</keyword>
<keyword id="KW-1185">Reference proteome</keyword>
<keyword id="KW-0808">Transferase</keyword>
<dbReference type="EC" id="2.7.1.30" evidence="2"/>
<dbReference type="EMBL" id="AK049275">
    <property type="protein sequence ID" value="BAC33651.1"/>
    <property type="molecule type" value="mRNA"/>
</dbReference>
<dbReference type="EMBL" id="AK160477">
    <property type="protein sequence ID" value="BAE35811.1"/>
    <property type="molecule type" value="mRNA"/>
</dbReference>
<dbReference type="EMBL" id="AK162119">
    <property type="protein sequence ID" value="BAE36735.1"/>
    <property type="molecule type" value="mRNA"/>
</dbReference>
<dbReference type="EMBL" id="AK167217">
    <property type="protein sequence ID" value="BAE39343.1"/>
    <property type="molecule type" value="mRNA"/>
</dbReference>
<dbReference type="EMBL" id="BC050033">
    <property type="protein sequence ID" value="AAH50033.1"/>
    <property type="status" value="ALT_INIT"/>
    <property type="molecule type" value="mRNA"/>
</dbReference>
<dbReference type="EMBL" id="BC116302">
    <property type="protein sequence ID" value="AAI16303.1"/>
    <property type="molecule type" value="mRNA"/>
</dbReference>
<dbReference type="EMBL" id="BC116303">
    <property type="protein sequence ID" value="AAI16304.1"/>
    <property type="molecule type" value="mRNA"/>
</dbReference>
<dbReference type="CCDS" id="CCDS52891.1">
    <molecule id="Q8BX05-2"/>
</dbReference>
<dbReference type="CCDS" id="CCDS90642.1">
    <molecule id="Q8BX05-1"/>
</dbReference>
<dbReference type="RefSeq" id="NP_001355808.1">
    <molecule id="Q8BX05-1"/>
    <property type="nucleotide sequence ID" value="NM_001368879.1"/>
</dbReference>
<dbReference type="RefSeq" id="NP_796326.1">
    <molecule id="Q8BX05-2"/>
    <property type="nucleotide sequence ID" value="NM_177352.5"/>
</dbReference>
<dbReference type="RefSeq" id="XP_006511194.1">
    <property type="nucleotide sequence ID" value="XM_006511131.2"/>
</dbReference>
<dbReference type="SMR" id="Q8BX05"/>
<dbReference type="BioGRID" id="231677">
    <property type="interactions" value="1"/>
</dbReference>
<dbReference type="FunCoup" id="Q8BX05">
    <property type="interactions" value="973"/>
</dbReference>
<dbReference type="STRING" id="10090.ENSMUSP00000112717"/>
<dbReference type="iPTMnet" id="Q8BX05"/>
<dbReference type="PhosphoSitePlus" id="Q8BX05"/>
<dbReference type="REPRODUCTION-2DPAGE" id="IPI00475236"/>
<dbReference type="PaxDb" id="10090-ENSMUSP00000112717"/>
<dbReference type="PeptideAtlas" id="Q8BX05"/>
<dbReference type="ProteomicsDB" id="271391">
    <molecule id="Q8BX05-1"/>
</dbReference>
<dbReference type="ProteomicsDB" id="271392">
    <molecule id="Q8BX05-2"/>
</dbReference>
<dbReference type="ProteomicsDB" id="271393">
    <molecule id="Q8BX05-3"/>
</dbReference>
<dbReference type="Pumba" id="Q8BX05"/>
<dbReference type="Antibodypedia" id="35071">
    <property type="antibodies" value="191 antibodies from 25 providers"/>
</dbReference>
<dbReference type="DNASU" id="235533"/>
<dbReference type="Ensembl" id="ENSMUST00000085217.12">
    <molecule id="Q8BX05-1"/>
    <property type="protein sequence ID" value="ENSMUSP00000082313.6"/>
    <property type="gene ID" value="ENSMUSG00000041440.19"/>
</dbReference>
<dbReference type="Ensembl" id="ENSMUST00000122383.3">
    <molecule id="Q8BX05-2"/>
    <property type="protein sequence ID" value="ENSMUSP00000112717.2"/>
    <property type="gene ID" value="ENSMUSG00000041440.19"/>
</dbReference>
<dbReference type="GeneID" id="235533"/>
<dbReference type="KEGG" id="mmu:235533"/>
<dbReference type="UCSC" id="uc009rbz.1">
    <molecule id="Q8BX05-1"/>
    <property type="organism name" value="mouse"/>
</dbReference>
<dbReference type="UCSC" id="uc009rca.1">
    <molecule id="Q8BX05-2"/>
    <property type="organism name" value="mouse"/>
</dbReference>
<dbReference type="UCSC" id="uc012gyo.1">
    <molecule id="Q8BX05-3"/>
    <property type="organism name" value="mouse"/>
</dbReference>
<dbReference type="AGR" id="MGI:2443336"/>
<dbReference type="CTD" id="256356"/>
<dbReference type="MGI" id="MGI:2443336">
    <property type="gene designation" value="Gk5"/>
</dbReference>
<dbReference type="VEuPathDB" id="HostDB:ENSMUSG00000041440"/>
<dbReference type="eggNOG" id="KOG2517">
    <property type="taxonomic scope" value="Eukaryota"/>
</dbReference>
<dbReference type="GeneTree" id="ENSGT01000000214434"/>
<dbReference type="HOGENOM" id="CLU_009281_2_3_1"/>
<dbReference type="InParanoid" id="Q8BX05"/>
<dbReference type="OMA" id="ECCFEPG"/>
<dbReference type="OrthoDB" id="6278781at2759"/>
<dbReference type="PhylomeDB" id="Q8BX05"/>
<dbReference type="TreeFam" id="TF321504"/>
<dbReference type="UniPathway" id="UPA00618">
    <property type="reaction ID" value="UER00672"/>
</dbReference>
<dbReference type="BioGRID-ORCS" id="235533">
    <property type="hits" value="1 hit in 79 CRISPR screens"/>
</dbReference>
<dbReference type="ChiTaRS" id="Gk5">
    <property type="organism name" value="mouse"/>
</dbReference>
<dbReference type="PRO" id="PR:Q8BX05"/>
<dbReference type="Proteomes" id="UP000000589">
    <property type="component" value="Chromosome 9"/>
</dbReference>
<dbReference type="RNAct" id="Q8BX05">
    <property type="molecule type" value="protein"/>
</dbReference>
<dbReference type="Bgee" id="ENSMUSG00000041440">
    <property type="expression patterns" value="Expressed in tail skin and 168 other cell types or tissues"/>
</dbReference>
<dbReference type="ExpressionAtlas" id="Q8BX05">
    <property type="expression patterns" value="baseline and differential"/>
</dbReference>
<dbReference type="GO" id="GO:0005737">
    <property type="term" value="C:cytoplasm"/>
    <property type="evidence" value="ECO:0000314"/>
    <property type="project" value="UniProtKB"/>
</dbReference>
<dbReference type="GO" id="GO:0005524">
    <property type="term" value="F:ATP binding"/>
    <property type="evidence" value="ECO:0007669"/>
    <property type="project" value="UniProtKB-KW"/>
</dbReference>
<dbReference type="GO" id="GO:0004370">
    <property type="term" value="F:glycerol kinase activity"/>
    <property type="evidence" value="ECO:0000314"/>
    <property type="project" value="UniProtKB"/>
</dbReference>
<dbReference type="GO" id="GO:0019563">
    <property type="term" value="P:glycerol catabolic process"/>
    <property type="evidence" value="ECO:0007669"/>
    <property type="project" value="UniProtKB-UniPathway"/>
</dbReference>
<dbReference type="GO" id="GO:0046167">
    <property type="term" value="P:glycerol-3-phosphate biosynthetic process"/>
    <property type="evidence" value="ECO:0000314"/>
    <property type="project" value="UniProtKB"/>
</dbReference>
<dbReference type="CDD" id="cd07793">
    <property type="entry name" value="ASKHA_NBD_FGGY_GK5-like"/>
    <property type="match status" value="1"/>
</dbReference>
<dbReference type="FunFam" id="3.30.420.40:FF:000102">
    <property type="entry name" value="Putative glycerol kinase 5"/>
    <property type="match status" value="1"/>
</dbReference>
<dbReference type="FunFam" id="3.30.420.40:FF:000104">
    <property type="entry name" value="putative glycerol kinase 5"/>
    <property type="match status" value="1"/>
</dbReference>
<dbReference type="Gene3D" id="3.30.420.40">
    <property type="match status" value="2"/>
</dbReference>
<dbReference type="InterPro" id="IPR043129">
    <property type="entry name" value="ATPase_NBD"/>
</dbReference>
<dbReference type="InterPro" id="IPR000577">
    <property type="entry name" value="Carb_kinase_FGGY"/>
</dbReference>
<dbReference type="InterPro" id="IPR018483">
    <property type="entry name" value="Carb_kinase_FGGY_CS"/>
</dbReference>
<dbReference type="InterPro" id="IPR018485">
    <property type="entry name" value="FGGY_C"/>
</dbReference>
<dbReference type="InterPro" id="IPR018484">
    <property type="entry name" value="FGGY_N"/>
</dbReference>
<dbReference type="InterPro" id="IPR037444">
    <property type="entry name" value="GK5"/>
</dbReference>
<dbReference type="PANTHER" id="PTHR10196:SF68">
    <property type="entry name" value="GLYCEROL KINASE 5-RELATED"/>
    <property type="match status" value="1"/>
</dbReference>
<dbReference type="PANTHER" id="PTHR10196">
    <property type="entry name" value="SUGAR KINASE"/>
    <property type="match status" value="1"/>
</dbReference>
<dbReference type="Pfam" id="PF02782">
    <property type="entry name" value="FGGY_C"/>
    <property type="match status" value="1"/>
</dbReference>
<dbReference type="Pfam" id="PF00370">
    <property type="entry name" value="FGGY_N"/>
    <property type="match status" value="1"/>
</dbReference>
<dbReference type="PIRSF" id="PIRSF000538">
    <property type="entry name" value="GlpK"/>
    <property type="match status" value="1"/>
</dbReference>
<dbReference type="SUPFAM" id="SSF53067">
    <property type="entry name" value="Actin-like ATPase domain"/>
    <property type="match status" value="2"/>
</dbReference>
<dbReference type="PROSITE" id="PS00445">
    <property type="entry name" value="FGGY_KINASES_2"/>
    <property type="match status" value="1"/>
</dbReference>
<reference key="1">
    <citation type="journal article" date="2005" name="Science">
        <title>The transcriptional landscape of the mammalian genome.</title>
        <authorList>
            <person name="Carninci P."/>
            <person name="Kasukawa T."/>
            <person name="Katayama S."/>
            <person name="Gough J."/>
            <person name="Frith M.C."/>
            <person name="Maeda N."/>
            <person name="Oyama R."/>
            <person name="Ravasi T."/>
            <person name="Lenhard B."/>
            <person name="Wells C."/>
            <person name="Kodzius R."/>
            <person name="Shimokawa K."/>
            <person name="Bajic V.B."/>
            <person name="Brenner S.E."/>
            <person name="Batalov S."/>
            <person name="Forrest A.R."/>
            <person name="Zavolan M."/>
            <person name="Davis M.J."/>
            <person name="Wilming L.G."/>
            <person name="Aidinis V."/>
            <person name="Allen J.E."/>
            <person name="Ambesi-Impiombato A."/>
            <person name="Apweiler R."/>
            <person name="Aturaliya R.N."/>
            <person name="Bailey T.L."/>
            <person name="Bansal M."/>
            <person name="Baxter L."/>
            <person name="Beisel K.W."/>
            <person name="Bersano T."/>
            <person name="Bono H."/>
            <person name="Chalk A.M."/>
            <person name="Chiu K.P."/>
            <person name="Choudhary V."/>
            <person name="Christoffels A."/>
            <person name="Clutterbuck D.R."/>
            <person name="Crowe M.L."/>
            <person name="Dalla E."/>
            <person name="Dalrymple B.P."/>
            <person name="de Bono B."/>
            <person name="Della Gatta G."/>
            <person name="di Bernardo D."/>
            <person name="Down T."/>
            <person name="Engstrom P."/>
            <person name="Fagiolini M."/>
            <person name="Faulkner G."/>
            <person name="Fletcher C.F."/>
            <person name="Fukushima T."/>
            <person name="Furuno M."/>
            <person name="Futaki S."/>
            <person name="Gariboldi M."/>
            <person name="Georgii-Hemming P."/>
            <person name="Gingeras T.R."/>
            <person name="Gojobori T."/>
            <person name="Green R.E."/>
            <person name="Gustincich S."/>
            <person name="Harbers M."/>
            <person name="Hayashi Y."/>
            <person name="Hensch T.K."/>
            <person name="Hirokawa N."/>
            <person name="Hill D."/>
            <person name="Huminiecki L."/>
            <person name="Iacono M."/>
            <person name="Ikeo K."/>
            <person name="Iwama A."/>
            <person name="Ishikawa T."/>
            <person name="Jakt M."/>
            <person name="Kanapin A."/>
            <person name="Katoh M."/>
            <person name="Kawasawa Y."/>
            <person name="Kelso J."/>
            <person name="Kitamura H."/>
            <person name="Kitano H."/>
            <person name="Kollias G."/>
            <person name="Krishnan S.P."/>
            <person name="Kruger A."/>
            <person name="Kummerfeld S.K."/>
            <person name="Kurochkin I.V."/>
            <person name="Lareau L.F."/>
            <person name="Lazarevic D."/>
            <person name="Lipovich L."/>
            <person name="Liu J."/>
            <person name="Liuni S."/>
            <person name="McWilliam S."/>
            <person name="Madan Babu M."/>
            <person name="Madera M."/>
            <person name="Marchionni L."/>
            <person name="Matsuda H."/>
            <person name="Matsuzawa S."/>
            <person name="Miki H."/>
            <person name="Mignone F."/>
            <person name="Miyake S."/>
            <person name="Morris K."/>
            <person name="Mottagui-Tabar S."/>
            <person name="Mulder N."/>
            <person name="Nakano N."/>
            <person name="Nakauchi H."/>
            <person name="Ng P."/>
            <person name="Nilsson R."/>
            <person name="Nishiguchi S."/>
            <person name="Nishikawa S."/>
            <person name="Nori F."/>
            <person name="Ohara O."/>
            <person name="Okazaki Y."/>
            <person name="Orlando V."/>
            <person name="Pang K.C."/>
            <person name="Pavan W.J."/>
            <person name="Pavesi G."/>
            <person name="Pesole G."/>
            <person name="Petrovsky N."/>
            <person name="Piazza S."/>
            <person name="Reed J."/>
            <person name="Reid J.F."/>
            <person name="Ring B.Z."/>
            <person name="Ringwald M."/>
            <person name="Rost B."/>
            <person name="Ruan Y."/>
            <person name="Salzberg S.L."/>
            <person name="Sandelin A."/>
            <person name="Schneider C."/>
            <person name="Schoenbach C."/>
            <person name="Sekiguchi K."/>
            <person name="Semple C.A."/>
            <person name="Seno S."/>
            <person name="Sessa L."/>
            <person name="Sheng Y."/>
            <person name="Shibata Y."/>
            <person name="Shimada H."/>
            <person name="Shimada K."/>
            <person name="Silva D."/>
            <person name="Sinclair B."/>
            <person name="Sperling S."/>
            <person name="Stupka E."/>
            <person name="Sugiura K."/>
            <person name="Sultana R."/>
            <person name="Takenaka Y."/>
            <person name="Taki K."/>
            <person name="Tammoja K."/>
            <person name="Tan S.L."/>
            <person name="Tang S."/>
            <person name="Taylor M.S."/>
            <person name="Tegner J."/>
            <person name="Teichmann S.A."/>
            <person name="Ueda H.R."/>
            <person name="van Nimwegen E."/>
            <person name="Verardo R."/>
            <person name="Wei C.L."/>
            <person name="Yagi K."/>
            <person name="Yamanishi H."/>
            <person name="Zabarovsky E."/>
            <person name="Zhu S."/>
            <person name="Zimmer A."/>
            <person name="Hide W."/>
            <person name="Bult C."/>
            <person name="Grimmond S.M."/>
            <person name="Teasdale R.D."/>
            <person name="Liu E.T."/>
            <person name="Brusic V."/>
            <person name="Quackenbush J."/>
            <person name="Wahlestedt C."/>
            <person name="Mattick J.S."/>
            <person name="Hume D.A."/>
            <person name="Kai C."/>
            <person name="Sasaki D."/>
            <person name="Tomaru Y."/>
            <person name="Fukuda S."/>
            <person name="Kanamori-Katayama M."/>
            <person name="Suzuki M."/>
            <person name="Aoki J."/>
            <person name="Arakawa T."/>
            <person name="Iida J."/>
            <person name="Imamura K."/>
            <person name="Itoh M."/>
            <person name="Kato T."/>
            <person name="Kawaji H."/>
            <person name="Kawagashira N."/>
            <person name="Kawashima T."/>
            <person name="Kojima M."/>
            <person name="Kondo S."/>
            <person name="Konno H."/>
            <person name="Nakano K."/>
            <person name="Ninomiya N."/>
            <person name="Nishio T."/>
            <person name="Okada M."/>
            <person name="Plessy C."/>
            <person name="Shibata K."/>
            <person name="Shiraki T."/>
            <person name="Suzuki S."/>
            <person name="Tagami M."/>
            <person name="Waki K."/>
            <person name="Watahiki A."/>
            <person name="Okamura-Oho Y."/>
            <person name="Suzuki H."/>
            <person name="Kawai J."/>
            <person name="Hayashizaki Y."/>
        </authorList>
    </citation>
    <scope>NUCLEOTIDE SEQUENCE [LARGE SCALE MRNA] (ISOFORMS 1 AND 2)</scope>
    <source>
        <strain>C57BL/6J</strain>
        <tissue>Blastocyst</tissue>
        <tissue>Egg</tissue>
        <tissue>Stomach</tissue>
    </source>
</reference>
<reference key="2">
    <citation type="journal article" date="2004" name="Genome Res.">
        <title>The status, quality, and expansion of the NIH full-length cDNA project: the Mammalian Gene Collection (MGC).</title>
        <authorList>
            <consortium name="The MGC Project Team"/>
        </authorList>
    </citation>
    <scope>NUCLEOTIDE SEQUENCE [LARGE SCALE MRNA] (ISOFORMS 2 AND 3)</scope>
    <source>
        <strain>NMRI</strain>
        <tissue>Mammary tumor</tissue>
    </source>
</reference>
<reference key="3">
    <citation type="journal article" date="2017" name="Proc. Natl. Acad. Sci. U.S.A.">
        <title>Skin-specific regulation of SREBP processing and lipid biosynthesis by glycerol kinase 5.</title>
        <authorList>
            <person name="Zhang D."/>
            <person name="Tomisato W."/>
            <person name="Su L."/>
            <person name="Sun L."/>
            <person name="Choi J.H."/>
            <person name="Zhang Z."/>
            <person name="Wang K.W."/>
            <person name="Zhan X."/>
            <person name="Choi M."/>
            <person name="Li X."/>
            <person name="Tang M."/>
            <person name="Castro-Perez J.M."/>
            <person name="Hildebrand S."/>
            <person name="Murray A.R."/>
            <person name="Moresco E.M.Y."/>
            <person name="Beutler B."/>
        </authorList>
    </citation>
    <scope>CATALYTIC ACTIVITY</scope>
    <scope>FUNCTION</scope>
    <scope>SUBCELLULAR LOCATION</scope>
    <scope>MUTAGENESIS OF 175-LEU--THR-534; ASP-280 AND ASP-443</scope>
</reference>
<proteinExistence type="evidence at protein level"/>
<organism>
    <name type="scientific">Mus musculus</name>
    <name type="common">Mouse</name>
    <dbReference type="NCBI Taxonomy" id="10090"/>
    <lineage>
        <taxon>Eukaryota</taxon>
        <taxon>Metazoa</taxon>
        <taxon>Chordata</taxon>
        <taxon>Craniata</taxon>
        <taxon>Vertebrata</taxon>
        <taxon>Euteleostomi</taxon>
        <taxon>Mammalia</taxon>
        <taxon>Eutheria</taxon>
        <taxon>Euarchontoglires</taxon>
        <taxon>Glires</taxon>
        <taxon>Rodentia</taxon>
        <taxon>Myomorpha</taxon>
        <taxon>Muroidea</taxon>
        <taxon>Muridae</taxon>
        <taxon>Murinae</taxon>
        <taxon>Mus</taxon>
        <taxon>Mus</taxon>
    </lineage>
</organism>
<protein>
    <recommendedName>
        <fullName>Glycerol kinase 5</fullName>
        <shortName>GK 5</shortName>
        <shortName>Glycerokinase 5</shortName>
        <ecNumber evidence="2">2.7.1.30</ecNumber>
    </recommendedName>
    <alternativeName>
        <fullName>ATP:glycerol 3-phosphotransferase 5</fullName>
    </alternativeName>
</protein>
<name>GLPK5_MOUSE</name>
<accession>Q8BX05</accession>
<accession>Q14B67</accession>
<accession>Q3TK02</accession>
<accession>Q3TSE0</accession>
<accession>Q80VA9</accession>
<feature type="chain" id="PRO_0000323755" description="Glycerol kinase 5">
    <location>
        <begin position="1"/>
        <end position="534"/>
    </location>
</feature>
<feature type="binding site" evidence="1">
    <location>
        <position position="33"/>
    </location>
    <ligand>
        <name>ATP</name>
        <dbReference type="ChEBI" id="CHEBI:30616"/>
    </ligand>
</feature>
<feature type="binding site" evidence="1">
    <location>
        <position position="34"/>
    </location>
    <ligand>
        <name>ATP</name>
        <dbReference type="ChEBI" id="CHEBI:30616"/>
    </ligand>
</feature>
<feature type="binding site" evidence="1">
    <location>
        <position position="103"/>
    </location>
    <ligand>
        <name>glycerol</name>
        <dbReference type="ChEBI" id="CHEBI:17754"/>
    </ligand>
</feature>
<feature type="binding site" evidence="1">
    <location>
        <position position="280"/>
    </location>
    <ligand>
        <name>glycerol</name>
        <dbReference type="ChEBI" id="CHEBI:17754"/>
    </ligand>
</feature>
<feature type="binding site" evidence="1">
    <location>
        <position position="281"/>
    </location>
    <ligand>
        <name>glycerol</name>
        <dbReference type="ChEBI" id="CHEBI:17754"/>
    </ligand>
</feature>
<feature type="binding site" evidence="1">
    <location>
        <position position="302"/>
    </location>
    <ligand>
        <name>ATP</name>
        <dbReference type="ChEBI" id="CHEBI:30616"/>
    </ligand>
</feature>
<feature type="binding site" evidence="1">
    <location>
        <position position="345"/>
    </location>
    <ligand>
        <name>ATP</name>
        <dbReference type="ChEBI" id="CHEBI:30616"/>
    </ligand>
</feature>
<feature type="binding site" evidence="1">
    <location>
        <position position="445"/>
    </location>
    <ligand>
        <name>ATP</name>
        <dbReference type="ChEBI" id="CHEBI:30616"/>
    </ligand>
</feature>
<feature type="splice variant" id="VSP_032124" description="In isoform 3." evidence="3">
    <location>
        <begin position="1"/>
        <end position="90"/>
    </location>
</feature>
<feature type="splice variant" id="VSP_032125" description="In isoform 2 and isoform 3." evidence="3 4">
    <original>VNMENWVKAVKRSMNWYNKT</original>
    <variation>AF</variation>
    <location>
        <begin position="515"/>
        <end position="534"/>
    </location>
</feature>
<feature type="mutagenesis site" description="In ENU mutant Toku; mutant animals show progressive hair loss and accumulation of dermal lipids." evidence="2">
    <location>
        <begin position="175"/>
        <end position="534"/>
    </location>
</feature>
<feature type="mutagenesis site" description="Reduced glycerol kinase activity. Mutant mice exhibit hair loss similar to that observed in Toku homozygotes." evidence="2">
    <original>D</original>
    <variation>N</variation>
    <location>
        <position position="280"/>
    </location>
</feature>
<feature type="mutagenesis site" description="Reduced glycerol kinase activity." evidence="2">
    <original>D</original>
    <variation>N</variation>
    <location>
        <position position="443"/>
    </location>
</feature>
<feature type="sequence conflict" description="In Ref. 2; AAH50033." evidence="6" ref="2">
    <original>A</original>
    <variation>P</variation>
    <location>
        <position position="45"/>
    </location>
</feature>